<proteinExistence type="inferred from homology"/>
<reference key="1">
    <citation type="submission" date="2008-02" db="EMBL/GenBank/DDBJ databases">
        <title>Complete sequence of chromosome 1 of Burkholderia cenocepacia MC0-3.</title>
        <authorList>
            <person name="Copeland A."/>
            <person name="Lucas S."/>
            <person name="Lapidus A."/>
            <person name="Barry K."/>
            <person name="Bruce D."/>
            <person name="Goodwin L."/>
            <person name="Glavina del Rio T."/>
            <person name="Dalin E."/>
            <person name="Tice H."/>
            <person name="Pitluck S."/>
            <person name="Chain P."/>
            <person name="Malfatti S."/>
            <person name="Shin M."/>
            <person name="Vergez L."/>
            <person name="Schmutz J."/>
            <person name="Larimer F."/>
            <person name="Land M."/>
            <person name="Hauser L."/>
            <person name="Kyrpides N."/>
            <person name="Mikhailova N."/>
            <person name="Tiedje J."/>
            <person name="Richardson P."/>
        </authorList>
    </citation>
    <scope>NUCLEOTIDE SEQUENCE [LARGE SCALE GENOMIC DNA]</scope>
    <source>
        <strain>MC0-3</strain>
    </source>
</reference>
<organism>
    <name type="scientific">Burkholderia orbicola (strain MC0-3)</name>
    <dbReference type="NCBI Taxonomy" id="406425"/>
    <lineage>
        <taxon>Bacteria</taxon>
        <taxon>Pseudomonadati</taxon>
        <taxon>Pseudomonadota</taxon>
        <taxon>Betaproteobacteria</taxon>
        <taxon>Burkholderiales</taxon>
        <taxon>Burkholderiaceae</taxon>
        <taxon>Burkholderia</taxon>
        <taxon>Burkholderia cepacia complex</taxon>
        <taxon>Burkholderia orbicola</taxon>
    </lineage>
</organism>
<feature type="chain" id="PRO_0000370919" description="ATP synthase subunit delta">
    <location>
        <begin position="1"/>
        <end position="179"/>
    </location>
</feature>
<keyword id="KW-0066">ATP synthesis</keyword>
<keyword id="KW-0997">Cell inner membrane</keyword>
<keyword id="KW-1003">Cell membrane</keyword>
<keyword id="KW-0139">CF(1)</keyword>
<keyword id="KW-0375">Hydrogen ion transport</keyword>
<keyword id="KW-0406">Ion transport</keyword>
<keyword id="KW-0472">Membrane</keyword>
<keyword id="KW-0813">Transport</keyword>
<evidence type="ECO:0000255" key="1">
    <source>
        <dbReference type="HAMAP-Rule" id="MF_01416"/>
    </source>
</evidence>
<name>ATPD_BURO0</name>
<dbReference type="EMBL" id="CP000958">
    <property type="protein sequence ID" value="ACA89299.1"/>
    <property type="molecule type" value="Genomic_DNA"/>
</dbReference>
<dbReference type="RefSeq" id="WP_006477284.1">
    <property type="nucleotide sequence ID" value="NC_010508.1"/>
</dbReference>
<dbReference type="SMR" id="B1JSV4"/>
<dbReference type="GeneID" id="83046918"/>
<dbReference type="KEGG" id="bcm:Bcenmc03_0119"/>
<dbReference type="HOGENOM" id="CLU_085114_3_0_4"/>
<dbReference type="Proteomes" id="UP000002169">
    <property type="component" value="Chromosome 1"/>
</dbReference>
<dbReference type="GO" id="GO:0005886">
    <property type="term" value="C:plasma membrane"/>
    <property type="evidence" value="ECO:0007669"/>
    <property type="project" value="UniProtKB-SubCell"/>
</dbReference>
<dbReference type="GO" id="GO:0045259">
    <property type="term" value="C:proton-transporting ATP synthase complex"/>
    <property type="evidence" value="ECO:0007669"/>
    <property type="project" value="UniProtKB-KW"/>
</dbReference>
<dbReference type="GO" id="GO:0046933">
    <property type="term" value="F:proton-transporting ATP synthase activity, rotational mechanism"/>
    <property type="evidence" value="ECO:0007669"/>
    <property type="project" value="UniProtKB-UniRule"/>
</dbReference>
<dbReference type="Gene3D" id="1.10.520.20">
    <property type="entry name" value="N-terminal domain of the delta subunit of the F1F0-ATP synthase"/>
    <property type="match status" value="1"/>
</dbReference>
<dbReference type="HAMAP" id="MF_01416">
    <property type="entry name" value="ATP_synth_delta_bact"/>
    <property type="match status" value="1"/>
</dbReference>
<dbReference type="InterPro" id="IPR026015">
    <property type="entry name" value="ATP_synth_OSCP/delta_N_sf"/>
</dbReference>
<dbReference type="InterPro" id="IPR000711">
    <property type="entry name" value="ATPase_OSCP/dsu"/>
</dbReference>
<dbReference type="NCBIfam" id="TIGR01145">
    <property type="entry name" value="ATP_synt_delta"/>
    <property type="match status" value="1"/>
</dbReference>
<dbReference type="NCBIfam" id="NF004402">
    <property type="entry name" value="PRK05758.2-2"/>
    <property type="match status" value="1"/>
</dbReference>
<dbReference type="PANTHER" id="PTHR11910">
    <property type="entry name" value="ATP SYNTHASE DELTA CHAIN"/>
    <property type="match status" value="1"/>
</dbReference>
<dbReference type="Pfam" id="PF00213">
    <property type="entry name" value="OSCP"/>
    <property type="match status" value="1"/>
</dbReference>
<dbReference type="PRINTS" id="PR00125">
    <property type="entry name" value="ATPASEDELTA"/>
</dbReference>
<dbReference type="SUPFAM" id="SSF47928">
    <property type="entry name" value="N-terminal domain of the delta subunit of the F1F0-ATP synthase"/>
    <property type="match status" value="1"/>
</dbReference>
<accession>B1JSV4</accession>
<protein>
    <recommendedName>
        <fullName evidence="1">ATP synthase subunit delta</fullName>
    </recommendedName>
    <alternativeName>
        <fullName evidence="1">ATP synthase F(1) sector subunit delta</fullName>
    </alternativeName>
    <alternativeName>
        <fullName evidence="1">F-type ATPase subunit delta</fullName>
        <shortName evidence="1">F-ATPase subunit delta</shortName>
    </alternativeName>
</protein>
<comment type="function">
    <text evidence="1">F(1)F(0) ATP synthase produces ATP from ADP in the presence of a proton or sodium gradient. F-type ATPases consist of two structural domains, F(1) containing the extramembraneous catalytic core and F(0) containing the membrane proton channel, linked together by a central stalk and a peripheral stalk. During catalysis, ATP synthesis in the catalytic domain of F(1) is coupled via a rotary mechanism of the central stalk subunits to proton translocation.</text>
</comment>
<comment type="function">
    <text evidence="1">This protein is part of the stalk that links CF(0) to CF(1). It either transmits conformational changes from CF(0) to CF(1) or is implicated in proton conduction.</text>
</comment>
<comment type="subunit">
    <text evidence="1">F-type ATPases have 2 components, F(1) - the catalytic core - and F(0) - the membrane proton channel. F(1) has five subunits: alpha(3), beta(3), gamma(1), delta(1), epsilon(1). F(0) has three main subunits: a(1), b(2) and c(10-14). The alpha and beta chains form an alternating ring which encloses part of the gamma chain. F(1) is attached to F(0) by a central stalk formed by the gamma and epsilon chains, while a peripheral stalk is formed by the delta and b chains.</text>
</comment>
<comment type="subcellular location">
    <subcellularLocation>
        <location evidence="1">Cell inner membrane</location>
        <topology evidence="1">Peripheral membrane protein</topology>
    </subcellularLocation>
</comment>
<comment type="similarity">
    <text evidence="1">Belongs to the ATPase delta chain family.</text>
</comment>
<gene>
    <name evidence="1" type="primary">atpH</name>
    <name type="ordered locus">Bcenmc03_0119</name>
</gene>
<sequence>MAELATIARPYAEALFRVAEGGDIAAWSTLVQELAQVARLPEVLSVASSPKVTRTQVAELLLAAVKSPVAAGAEAKNFVQMLVDNHRIALLPEIAEQFEALKNEREGAADAEIVSAFPLNGADLDSLVSGLERKFKRKLKPTVEVDSSLIGGVRVTVGDEVLDTSVRARLASMQAALTA</sequence>